<evidence type="ECO:0000250" key="1"/>
<evidence type="ECO:0000255" key="2"/>
<evidence type="ECO:0000305" key="3"/>
<sequence>MQRFTGLVTATTLATYLLVVLGVATELTGGVSPAAVAHYVTAGAVWLLLVAAAALAWRDSRLPRVKWGVTAAAVAYPAQAAVGMAVLASGGPGQLHLFGGVGVFALLLITLTWHLDREVEPRERAAATAFNREGDGDDSVLLYRLPDGLRRYVELTKPRLMWLLCLLALSGMALATVTGAALDGVTIAATLFGGVLAVGAAGTFNHVYERDRDRRMNRTADRPVATDAVGVGRATAFGVGLLVVSMAVLVWLVNPLAAALTAVAVVYYAVVYTVVLKPTTTWNTVIGGGAGALPAVIGWAAVAGSIGLPALLLAAVVFCWTPAHFYNLAIAYRDDYARGDYPMLPVVAGVAATRRRILYWLGATLLVAGALGAVAGFGPVYALTSAVVGFGFLWTVVVQFRTESDRDAYRSFHASNAYLGALLVAILVETMVI</sequence>
<comment type="function">
    <text evidence="1">Converts heme B (protoheme IX) to heme O by substitution of the vinyl group on carbon 2 of heme B porphyrin ring with a hydroxyethyl farnesyl side group.</text>
</comment>
<comment type="catalytic activity">
    <reaction>
        <text>heme b + (2E,6E)-farnesyl diphosphate + H2O = Fe(II)-heme o + diphosphate</text>
        <dbReference type="Rhea" id="RHEA:28070"/>
        <dbReference type="ChEBI" id="CHEBI:15377"/>
        <dbReference type="ChEBI" id="CHEBI:33019"/>
        <dbReference type="ChEBI" id="CHEBI:60344"/>
        <dbReference type="ChEBI" id="CHEBI:60530"/>
        <dbReference type="ChEBI" id="CHEBI:175763"/>
        <dbReference type="EC" id="2.5.1.141"/>
    </reaction>
</comment>
<comment type="pathway">
    <text>Porphyrin-containing compound metabolism; heme O biosynthesis; heme O from protoheme: step 1/1.</text>
</comment>
<comment type="subcellular location">
    <subcellularLocation>
        <location evidence="3">Cell membrane</location>
        <topology evidence="3">Multi-pass membrane protein</topology>
    </subcellularLocation>
</comment>
<comment type="miscellaneous">
    <text evidence="1">Carbon 2 of the heme B porphyrin ring is defined according to the Fischer nomenclature.</text>
</comment>
<comment type="similarity">
    <text evidence="3">In the C-terminal section; belongs to the UbiA prenyltransferase family. Protoheme IX farnesyltransferase subfamily.</text>
</comment>
<gene>
    <name type="primary">ctaB2</name>
    <name type="ordered locus">NP_4288A</name>
</gene>
<keyword id="KW-1003">Cell membrane</keyword>
<keyword id="KW-0350">Heme biosynthesis</keyword>
<keyword id="KW-0472">Membrane</keyword>
<keyword id="KW-1185">Reference proteome</keyword>
<keyword id="KW-0808">Transferase</keyword>
<keyword id="KW-0812">Transmembrane</keyword>
<keyword id="KW-1133">Transmembrane helix</keyword>
<proteinExistence type="inferred from homology"/>
<feature type="chain" id="PRO_0000327205" description="Protoheme IX farnesyltransferase 2">
    <location>
        <begin position="1"/>
        <end position="433"/>
    </location>
</feature>
<feature type="transmembrane region" description="Helical" evidence="2">
    <location>
        <begin position="4"/>
        <end position="24"/>
    </location>
</feature>
<feature type="transmembrane region" description="Helical" evidence="2">
    <location>
        <begin position="35"/>
        <end position="55"/>
    </location>
</feature>
<feature type="transmembrane region" description="Helical" evidence="2">
    <location>
        <begin position="67"/>
        <end position="87"/>
    </location>
</feature>
<feature type="transmembrane region" description="Helical" evidence="2">
    <location>
        <begin position="95"/>
        <end position="115"/>
    </location>
</feature>
<feature type="transmembrane region" description="Helical" evidence="2">
    <location>
        <begin position="160"/>
        <end position="180"/>
    </location>
</feature>
<feature type="transmembrane region" description="Helical" evidence="2">
    <location>
        <begin position="184"/>
        <end position="204"/>
    </location>
</feature>
<feature type="transmembrane region" description="Helical" evidence="2">
    <location>
        <begin position="236"/>
        <end position="256"/>
    </location>
</feature>
<feature type="transmembrane region" description="Helical" evidence="2">
    <location>
        <begin position="257"/>
        <end position="277"/>
    </location>
</feature>
<feature type="transmembrane region" description="Helical" evidence="2">
    <location>
        <begin position="282"/>
        <end position="304"/>
    </location>
</feature>
<feature type="transmembrane region" description="Helical" evidence="2">
    <location>
        <begin position="308"/>
        <end position="330"/>
    </location>
</feature>
<feature type="transmembrane region" description="Helical" evidence="2">
    <location>
        <begin position="357"/>
        <end position="377"/>
    </location>
</feature>
<feature type="transmembrane region" description="Helical" evidence="2">
    <location>
        <begin position="378"/>
        <end position="398"/>
    </location>
</feature>
<feature type="transmembrane region" description="Helical" evidence="2">
    <location>
        <begin position="413"/>
        <end position="433"/>
    </location>
</feature>
<feature type="region of interest" description="Unknown">
    <location>
        <begin position="1"/>
        <end position="164"/>
    </location>
</feature>
<feature type="region of interest" description="Protoheme IX prenyltransferase">
    <location>
        <begin position="165"/>
        <end position="430"/>
    </location>
</feature>
<name>COXX2_NATPD</name>
<dbReference type="EC" id="2.5.1.141"/>
<dbReference type="EMBL" id="CR936257">
    <property type="protein sequence ID" value="CAI50235.1"/>
    <property type="molecule type" value="Genomic_DNA"/>
</dbReference>
<dbReference type="RefSeq" id="WP_011323851.1">
    <property type="nucleotide sequence ID" value="NC_007426.1"/>
</dbReference>
<dbReference type="SMR" id="Q3INR7"/>
<dbReference type="STRING" id="348780.NP_4288A"/>
<dbReference type="EnsemblBacteria" id="CAI50235">
    <property type="protein sequence ID" value="CAI50235"/>
    <property type="gene ID" value="NP_4288A"/>
</dbReference>
<dbReference type="GeneID" id="3702643"/>
<dbReference type="KEGG" id="nph:NP_4288A"/>
<dbReference type="eggNOG" id="arCOG00479">
    <property type="taxonomic scope" value="Archaea"/>
</dbReference>
<dbReference type="HOGENOM" id="CLU_030009_1_1_2"/>
<dbReference type="OrthoDB" id="131615at2157"/>
<dbReference type="UniPathway" id="UPA00834">
    <property type="reaction ID" value="UER00712"/>
</dbReference>
<dbReference type="Proteomes" id="UP000002698">
    <property type="component" value="Chromosome"/>
</dbReference>
<dbReference type="GO" id="GO:0005886">
    <property type="term" value="C:plasma membrane"/>
    <property type="evidence" value="ECO:0007669"/>
    <property type="project" value="UniProtKB-SubCell"/>
</dbReference>
<dbReference type="GO" id="GO:0008495">
    <property type="term" value="F:protoheme IX farnesyltransferase activity"/>
    <property type="evidence" value="ECO:0007669"/>
    <property type="project" value="UniProtKB-UniRule"/>
</dbReference>
<dbReference type="GO" id="GO:0048034">
    <property type="term" value="P:heme O biosynthetic process"/>
    <property type="evidence" value="ECO:0007669"/>
    <property type="project" value="UniProtKB-UniRule"/>
</dbReference>
<dbReference type="CDD" id="cd13957">
    <property type="entry name" value="PT_UbiA_Cox10"/>
    <property type="match status" value="1"/>
</dbReference>
<dbReference type="Gene3D" id="1.10.357.140">
    <property type="entry name" value="UbiA prenyltransferase"/>
    <property type="match status" value="1"/>
</dbReference>
<dbReference type="HAMAP" id="MF_00154">
    <property type="entry name" value="CyoE_CtaB"/>
    <property type="match status" value="1"/>
</dbReference>
<dbReference type="InterPro" id="IPR006369">
    <property type="entry name" value="Protohaem_IX_farnesylTrfase"/>
</dbReference>
<dbReference type="InterPro" id="IPR000537">
    <property type="entry name" value="UbiA_prenyltransferase"/>
</dbReference>
<dbReference type="InterPro" id="IPR044878">
    <property type="entry name" value="UbiA_sf"/>
</dbReference>
<dbReference type="NCBIfam" id="TIGR01473">
    <property type="entry name" value="cyoE_ctaB"/>
    <property type="match status" value="1"/>
</dbReference>
<dbReference type="NCBIfam" id="NF003349">
    <property type="entry name" value="PRK04375.1-2"/>
    <property type="match status" value="1"/>
</dbReference>
<dbReference type="PANTHER" id="PTHR43448">
    <property type="entry name" value="PROTOHEME IX FARNESYLTRANSFERASE, MITOCHONDRIAL"/>
    <property type="match status" value="1"/>
</dbReference>
<dbReference type="PANTHER" id="PTHR43448:SF2">
    <property type="entry name" value="PROTOHEME IX FARNESYLTRANSFERASE, MITOCHONDRIAL"/>
    <property type="match status" value="1"/>
</dbReference>
<dbReference type="Pfam" id="PF01040">
    <property type="entry name" value="UbiA"/>
    <property type="match status" value="1"/>
</dbReference>
<reference key="1">
    <citation type="journal article" date="2005" name="Genome Res.">
        <title>Living with two extremes: conclusions from the genome sequence of Natronomonas pharaonis.</title>
        <authorList>
            <person name="Falb M."/>
            <person name="Pfeiffer F."/>
            <person name="Palm P."/>
            <person name="Rodewald K."/>
            <person name="Hickmann V."/>
            <person name="Tittor J."/>
            <person name="Oesterhelt D."/>
        </authorList>
    </citation>
    <scope>NUCLEOTIDE SEQUENCE [LARGE SCALE GENOMIC DNA]</scope>
    <source>
        <strain>ATCC 35678 / DSM 2160 / CIP 103997 / JCM 8858 / NBRC 14720 / NCIMB 2260 / Gabara</strain>
    </source>
</reference>
<protein>
    <recommendedName>
        <fullName>Protoheme IX farnesyltransferase 2</fullName>
        <ecNumber>2.5.1.141</ecNumber>
    </recommendedName>
    <alternativeName>
        <fullName>Heme B farnesyltransferase 2</fullName>
    </alternativeName>
    <alternativeName>
        <fullName>Heme O synthase 2</fullName>
    </alternativeName>
</protein>
<organism>
    <name type="scientific">Natronomonas pharaonis (strain ATCC 35678 / DSM 2160 / CIP 103997 / JCM 8858 / NBRC 14720 / NCIMB 2260 / Gabara)</name>
    <name type="common">Halobacterium pharaonis</name>
    <dbReference type="NCBI Taxonomy" id="348780"/>
    <lineage>
        <taxon>Archaea</taxon>
        <taxon>Methanobacteriati</taxon>
        <taxon>Methanobacteriota</taxon>
        <taxon>Stenosarchaea group</taxon>
        <taxon>Halobacteria</taxon>
        <taxon>Halobacteriales</taxon>
        <taxon>Haloarculaceae</taxon>
        <taxon>Natronomonas</taxon>
    </lineage>
</organism>
<accession>Q3INR7</accession>